<dbReference type="EMBL" id="X56883">
    <property type="protein sequence ID" value="CAA40205.1"/>
    <property type="molecule type" value="mRNA"/>
</dbReference>
<dbReference type="EMBL" id="AL670010">
    <property type="protein sequence ID" value="CAD21402.1"/>
    <property type="molecule type" value="Genomic_DNA"/>
</dbReference>
<dbReference type="EMBL" id="CM002240">
    <property type="protein sequence ID" value="EAA32309.1"/>
    <property type="molecule type" value="Genomic_DNA"/>
</dbReference>
<dbReference type="PIR" id="S13418">
    <property type="entry name" value="S13418"/>
</dbReference>
<dbReference type="RefSeq" id="XP_961545.1">
    <property type="nucleotide sequence ID" value="XM_956452.3"/>
</dbReference>
<dbReference type="PDB" id="5O8O">
    <property type="method" value="EM"/>
    <property type="resolution" value="6.80 A"/>
    <property type="chains" value="A=1-349"/>
</dbReference>
<dbReference type="PDB" id="8B4I">
    <property type="method" value="EM"/>
    <property type="resolution" value="3.32 A"/>
    <property type="chains" value="A/B=1-349"/>
</dbReference>
<dbReference type="PDBsum" id="5O8O"/>
<dbReference type="PDBsum" id="8B4I"/>
<dbReference type="EMDB" id="EMD-3761"/>
<dbReference type="SMR" id="P24391"/>
<dbReference type="FunCoup" id="P24391">
    <property type="interactions" value="785"/>
</dbReference>
<dbReference type="IntAct" id="P24391">
    <property type="interactions" value="1"/>
</dbReference>
<dbReference type="STRING" id="367110.P24391"/>
<dbReference type="PaxDb" id="5141-EFNCRP00000004357"/>
<dbReference type="EnsemblFungi" id="EAA32309">
    <property type="protein sequence ID" value="EAA32309"/>
    <property type="gene ID" value="NCU01179"/>
</dbReference>
<dbReference type="GeneID" id="3877741"/>
<dbReference type="KEGG" id="ncr:NCU01179"/>
<dbReference type="VEuPathDB" id="FungiDB:NCU01179"/>
<dbReference type="HOGENOM" id="CLU_042174_0_0_1"/>
<dbReference type="InParanoid" id="P24391"/>
<dbReference type="OMA" id="TRFNYRW"/>
<dbReference type="OrthoDB" id="19656at2759"/>
<dbReference type="Proteomes" id="UP000001805">
    <property type="component" value="Chromosome 2, Linkage Group V"/>
</dbReference>
<dbReference type="GO" id="GO:0005742">
    <property type="term" value="C:mitochondrial outer membrane translocase complex"/>
    <property type="evidence" value="ECO:0000318"/>
    <property type="project" value="GO_Central"/>
</dbReference>
<dbReference type="GO" id="GO:0046930">
    <property type="term" value="C:pore complex"/>
    <property type="evidence" value="ECO:0007669"/>
    <property type="project" value="UniProtKB-KW"/>
</dbReference>
<dbReference type="GO" id="GO:0015288">
    <property type="term" value="F:porin activity"/>
    <property type="evidence" value="ECO:0007669"/>
    <property type="project" value="UniProtKB-KW"/>
</dbReference>
<dbReference type="GO" id="GO:0008320">
    <property type="term" value="F:protein transmembrane transporter activity"/>
    <property type="evidence" value="ECO:0000318"/>
    <property type="project" value="GO_Central"/>
</dbReference>
<dbReference type="GO" id="GO:0006811">
    <property type="term" value="P:monoatomic ion transport"/>
    <property type="evidence" value="ECO:0007669"/>
    <property type="project" value="UniProtKB-KW"/>
</dbReference>
<dbReference type="GO" id="GO:0030150">
    <property type="term" value="P:protein import into mitochondrial matrix"/>
    <property type="evidence" value="ECO:0000318"/>
    <property type="project" value="GO_Central"/>
</dbReference>
<dbReference type="GO" id="GO:0045040">
    <property type="term" value="P:protein insertion into mitochondrial outer membrane"/>
    <property type="evidence" value="ECO:0007669"/>
    <property type="project" value="EnsemblFungi"/>
</dbReference>
<dbReference type="CDD" id="cd07305">
    <property type="entry name" value="Porin3_Tom40"/>
    <property type="match status" value="1"/>
</dbReference>
<dbReference type="FunFam" id="2.40.160.10:FF:000009">
    <property type="entry name" value="Mitochondrial import receptor subunit TOM40"/>
    <property type="match status" value="1"/>
</dbReference>
<dbReference type="Gene3D" id="2.40.160.10">
    <property type="entry name" value="Porin"/>
    <property type="match status" value="1"/>
</dbReference>
<dbReference type="InterPro" id="IPR023614">
    <property type="entry name" value="Porin_dom_sf"/>
</dbReference>
<dbReference type="InterPro" id="IPR027246">
    <property type="entry name" value="Porin_Euk/Tom40"/>
</dbReference>
<dbReference type="InterPro" id="IPR037930">
    <property type="entry name" value="Tom40"/>
</dbReference>
<dbReference type="InterPro" id="IPR005686">
    <property type="entry name" value="Tom40_fungi"/>
</dbReference>
<dbReference type="NCBIfam" id="TIGR00989">
    <property type="entry name" value="3a0801s07tom40"/>
    <property type="match status" value="1"/>
</dbReference>
<dbReference type="PANTHER" id="PTHR10802">
    <property type="entry name" value="MITOCHONDRIAL IMPORT RECEPTOR SUBUNIT TOM40"/>
    <property type="match status" value="1"/>
</dbReference>
<dbReference type="Pfam" id="PF01459">
    <property type="entry name" value="Porin_3"/>
    <property type="match status" value="1"/>
</dbReference>
<protein>
    <recommendedName>
        <fullName>Mitochondrial import receptor subunit tom40</fullName>
    </recommendedName>
    <alternativeName>
        <fullName>Protein MOM38</fullName>
    </alternativeName>
    <alternativeName>
        <fullName>Translocase of outer membrane 40 kDa subunit</fullName>
    </alternativeName>
</protein>
<accession>P24391</accession>
<accession>Q7RVE2</accession>
<keyword id="KW-0002">3D-structure</keyword>
<keyword id="KW-0406">Ion transport</keyword>
<keyword id="KW-0472">Membrane</keyword>
<keyword id="KW-0496">Mitochondrion</keyword>
<keyword id="KW-1000">Mitochondrion outer membrane</keyword>
<keyword id="KW-0626">Porin</keyword>
<keyword id="KW-0653">Protein transport</keyword>
<keyword id="KW-1185">Reference proteome</keyword>
<keyword id="KW-0812">Transmembrane</keyword>
<keyword id="KW-1134">Transmembrane beta strand</keyword>
<keyword id="KW-0813">Transport</keyword>
<comment type="function">
    <text evidence="1">Channel-forming protein essential for import of protein precursors into mitochondria.</text>
</comment>
<comment type="subunit">
    <text evidence="1">Forms part of the preprotein translocase complex of the outer mitochondrial membrane (TOM complex) which consists of at least 8 different proteins (tom5, tom6, tom7, tom20, tom22, tom37, tom40 and tom70). Interacts with mitochondrial targeting sequences.</text>
</comment>
<comment type="interaction">
    <interactant intactId="EBI-1791540">
        <id>P24391</id>
    </interactant>
    <interactant intactId="EBI-516580">
        <id>Q07812</id>
        <label>BAX</label>
    </interactant>
    <organismsDiffer>true</organismsDiffer>
    <experiments>2</experiments>
</comment>
<comment type="subcellular location">
    <subcellularLocation>
        <location>Mitochondrion outer membrane</location>
        <topology>Multi-pass membrane protein</topology>
    </subcellularLocation>
</comment>
<comment type="similarity">
    <text evidence="2">Belongs to the Tom40 family.</text>
</comment>
<organism>
    <name type="scientific">Neurospora crassa (strain ATCC 24698 / 74-OR23-1A / CBS 708.71 / DSM 1257 / FGSC 987)</name>
    <dbReference type="NCBI Taxonomy" id="367110"/>
    <lineage>
        <taxon>Eukaryota</taxon>
        <taxon>Fungi</taxon>
        <taxon>Dikarya</taxon>
        <taxon>Ascomycota</taxon>
        <taxon>Pezizomycotina</taxon>
        <taxon>Sordariomycetes</taxon>
        <taxon>Sordariomycetidae</taxon>
        <taxon>Sordariales</taxon>
        <taxon>Sordariaceae</taxon>
        <taxon>Neurospora</taxon>
    </lineage>
</organism>
<reference key="1">
    <citation type="journal article" date="1990" name="Nature">
        <title>Identification of a mitochondrial receptor complex required for recognition and membrane insertion of precursor proteins.</title>
        <authorList>
            <person name="Kiebler M."/>
            <person name="Pfaller R."/>
            <person name="Soellner T."/>
            <person name="Griffiths G."/>
            <person name="Horstmann H."/>
            <person name="Pfanner N."/>
            <person name="Neupert W."/>
        </authorList>
    </citation>
    <scope>NUCLEOTIDE SEQUENCE [MRNA]</scope>
</reference>
<reference key="2">
    <citation type="journal article" date="2003" name="Nucleic Acids Res.">
        <title>What's in the genome of a filamentous fungus? Analysis of the Neurospora genome sequence.</title>
        <authorList>
            <person name="Mannhaupt G."/>
            <person name="Montrone C."/>
            <person name="Haase D."/>
            <person name="Mewes H.-W."/>
            <person name="Aign V."/>
            <person name="Hoheisel J.D."/>
            <person name="Fartmann B."/>
            <person name="Nyakatura G."/>
            <person name="Kempken F."/>
            <person name="Maier J."/>
            <person name="Schulte U."/>
        </authorList>
    </citation>
    <scope>NUCLEOTIDE SEQUENCE [LARGE SCALE GENOMIC DNA]</scope>
    <source>
        <strain>ATCC 24698 / 74-OR23-1A / CBS 708.71 / DSM 1257 / FGSC 987</strain>
    </source>
</reference>
<reference key="3">
    <citation type="journal article" date="2003" name="Nature">
        <title>The genome sequence of the filamentous fungus Neurospora crassa.</title>
        <authorList>
            <person name="Galagan J.E."/>
            <person name="Calvo S.E."/>
            <person name="Borkovich K.A."/>
            <person name="Selker E.U."/>
            <person name="Read N.D."/>
            <person name="Jaffe D.B."/>
            <person name="FitzHugh W."/>
            <person name="Ma L.-J."/>
            <person name="Smirnov S."/>
            <person name="Purcell S."/>
            <person name="Rehman B."/>
            <person name="Elkins T."/>
            <person name="Engels R."/>
            <person name="Wang S."/>
            <person name="Nielsen C.B."/>
            <person name="Butler J."/>
            <person name="Endrizzi M."/>
            <person name="Qui D."/>
            <person name="Ianakiev P."/>
            <person name="Bell-Pedersen D."/>
            <person name="Nelson M.A."/>
            <person name="Werner-Washburne M."/>
            <person name="Selitrennikoff C.P."/>
            <person name="Kinsey J.A."/>
            <person name="Braun E.L."/>
            <person name="Zelter A."/>
            <person name="Schulte U."/>
            <person name="Kothe G.O."/>
            <person name="Jedd G."/>
            <person name="Mewes H.-W."/>
            <person name="Staben C."/>
            <person name="Marcotte E."/>
            <person name="Greenberg D."/>
            <person name="Roy A."/>
            <person name="Foley K."/>
            <person name="Naylor J."/>
            <person name="Stange-Thomann N."/>
            <person name="Barrett R."/>
            <person name="Gnerre S."/>
            <person name="Kamal M."/>
            <person name="Kamvysselis M."/>
            <person name="Mauceli E.W."/>
            <person name="Bielke C."/>
            <person name="Rudd S."/>
            <person name="Frishman D."/>
            <person name="Krystofova S."/>
            <person name="Rasmussen C."/>
            <person name="Metzenberg R.L."/>
            <person name="Perkins D.D."/>
            <person name="Kroken S."/>
            <person name="Cogoni C."/>
            <person name="Macino G."/>
            <person name="Catcheside D.E.A."/>
            <person name="Li W."/>
            <person name="Pratt R.J."/>
            <person name="Osmani S.A."/>
            <person name="DeSouza C.P.C."/>
            <person name="Glass N.L."/>
            <person name="Orbach M.J."/>
            <person name="Berglund J.A."/>
            <person name="Voelker R."/>
            <person name="Yarden O."/>
            <person name="Plamann M."/>
            <person name="Seiler S."/>
            <person name="Dunlap J.C."/>
            <person name="Radford A."/>
            <person name="Aramayo R."/>
            <person name="Natvig D.O."/>
            <person name="Alex L.A."/>
            <person name="Mannhaupt G."/>
            <person name="Ebbole D.J."/>
            <person name="Freitag M."/>
            <person name="Paulsen I."/>
            <person name="Sachs M.S."/>
            <person name="Lander E.S."/>
            <person name="Nusbaum C."/>
            <person name="Birren B.W."/>
        </authorList>
    </citation>
    <scope>NUCLEOTIDE SEQUENCE [LARGE SCALE GENOMIC DNA]</scope>
    <source>
        <strain>ATCC 24698 / 74-OR23-1A / CBS 708.71 / DSM 1257 / FGSC 987</strain>
    </source>
</reference>
<reference key="4">
    <citation type="journal article" date="2001" name="J. Cell Biol.">
        <title>Tom40, the pore-forming component of the protein-conducting TOM channel in the outer membrane of mitochondria.</title>
        <authorList>
            <person name="Ahting U."/>
            <person name="Thieffry M."/>
            <person name="Engelhardt H."/>
            <person name="Hegerl R."/>
            <person name="Neupert W."/>
            <person name="Nussberger S."/>
        </authorList>
    </citation>
    <scope>FUNCTION</scope>
    <scope>SUBUNIT</scope>
</reference>
<evidence type="ECO:0000269" key="1">
    <source>
    </source>
</evidence>
<evidence type="ECO:0000305" key="2"/>
<evidence type="ECO:0007829" key="3">
    <source>
        <dbReference type="PDB" id="8B4I"/>
    </source>
</evidence>
<gene>
    <name type="primary">tom40</name>
    <name type="synonym">mom38</name>
    <name type="ORF">B10H4.150</name>
    <name type="ORF">NCU01179</name>
</gene>
<name>TOM40_NEUCR</name>
<sequence length="349" mass="38151">MASFSTESPLAMLRDNAIYSSLSDAFNAFQERRKQFGLSNPGTIETIAREVQRDTLLTNYMFSGLRADVTKAFSLAPLFQVSHQFAMGERLNPYAFAALYGTNQIFAQGNLDNEGALSTRFNYRWGDRTITKTQFSIGGGQDMAQFEHEHLGDDFSASLKAINPSFLDGGLTGIFVGDYLQAVTPRLGLGLQAVWQRQGLTQGPDTAISYFARYKAGDWVASAQLQAQGALNTSFWKKLTDRVQAGVDMTLSVAPSQSMMGGLTKEGITTFGAKYDFRMSTFRAQIDSKGKLSCLLEKRLGAAPVTLTFAADVDHVTQQAKLGMSVSIEASDVDLQEQQEGAQSLNIPF</sequence>
<feature type="chain" id="PRO_0000051533" description="Mitochondrial import receptor subunit tom40">
    <location>
        <begin position="1"/>
        <end position="349"/>
    </location>
</feature>
<feature type="helix" evidence="3">
    <location>
        <begin position="26"/>
        <end position="33"/>
    </location>
</feature>
<feature type="helix" evidence="3">
    <location>
        <begin position="44"/>
        <end position="46"/>
    </location>
</feature>
<feature type="helix" evidence="3">
    <location>
        <begin position="49"/>
        <end position="52"/>
    </location>
</feature>
<feature type="turn" evidence="3">
    <location>
        <begin position="53"/>
        <end position="55"/>
    </location>
</feature>
<feature type="turn" evidence="3">
    <location>
        <begin position="58"/>
        <end position="60"/>
    </location>
</feature>
<feature type="strand" evidence="3">
    <location>
        <begin position="64"/>
        <end position="74"/>
    </location>
</feature>
<feature type="turn" evidence="3">
    <location>
        <begin position="75"/>
        <end position="77"/>
    </location>
</feature>
<feature type="strand" evidence="3">
    <location>
        <begin position="78"/>
        <end position="86"/>
    </location>
</feature>
<feature type="strand" evidence="3">
    <location>
        <begin position="94"/>
        <end position="101"/>
    </location>
</feature>
<feature type="strand" evidence="3">
    <location>
        <begin position="103"/>
        <end position="112"/>
    </location>
</feature>
<feature type="strand" evidence="3">
    <location>
        <begin position="117"/>
        <end position="124"/>
    </location>
</feature>
<feature type="strand" evidence="3">
    <location>
        <begin position="126"/>
        <end position="140"/>
    </location>
</feature>
<feature type="strand" evidence="3">
    <location>
        <begin position="143"/>
        <end position="151"/>
    </location>
</feature>
<feature type="strand" evidence="3">
    <location>
        <begin position="153"/>
        <end position="165"/>
    </location>
</feature>
<feature type="strand" evidence="3">
    <location>
        <begin position="172"/>
        <end position="184"/>
    </location>
</feature>
<feature type="strand" evidence="3">
    <location>
        <begin position="187"/>
        <end position="199"/>
    </location>
</feature>
<feature type="strand" evidence="3">
    <location>
        <begin position="205"/>
        <end position="215"/>
    </location>
</feature>
<feature type="strand" evidence="3">
    <location>
        <begin position="217"/>
        <end position="225"/>
    </location>
</feature>
<feature type="strand" evidence="3">
    <location>
        <begin position="231"/>
        <end position="240"/>
    </location>
</feature>
<feature type="strand" evidence="3">
    <location>
        <begin position="243"/>
        <end position="255"/>
    </location>
</feature>
<feature type="strand" evidence="3">
    <location>
        <begin position="259"/>
        <end position="277"/>
    </location>
</feature>
<feature type="strand" evidence="3">
    <location>
        <begin position="280"/>
        <end position="286"/>
    </location>
</feature>
<feature type="strand" evidence="3">
    <location>
        <begin position="290"/>
        <end position="299"/>
    </location>
</feature>
<feature type="strand" evidence="3">
    <location>
        <begin position="306"/>
        <end position="314"/>
    </location>
</feature>
<feature type="turn" evidence="3">
    <location>
        <begin position="315"/>
        <end position="318"/>
    </location>
</feature>
<feature type="strand" evidence="3">
    <location>
        <begin position="319"/>
        <end position="331"/>
    </location>
</feature>
<feature type="helix" evidence="3">
    <location>
        <begin position="335"/>
        <end position="342"/>
    </location>
</feature>
<proteinExistence type="evidence at protein level"/>